<dbReference type="EC" id="2.7.1.30" evidence="1"/>
<dbReference type="EMBL" id="AL123456">
    <property type="protein sequence ID" value="CCP46520.1"/>
    <property type="molecule type" value="Genomic_DNA"/>
</dbReference>
<dbReference type="PIR" id="A70793">
    <property type="entry name" value="A70793"/>
</dbReference>
<dbReference type="RefSeq" id="NP_218213.1">
    <property type="nucleotide sequence ID" value="NC_000962.3"/>
</dbReference>
<dbReference type="RefSeq" id="WP_003899643.1">
    <property type="nucleotide sequence ID" value="NZ_NVQJ01000028.1"/>
</dbReference>
<dbReference type="SMR" id="P9WPK1"/>
<dbReference type="FunCoup" id="P9WPK1">
    <property type="interactions" value="285"/>
</dbReference>
<dbReference type="STRING" id="83332.Rv3696c"/>
<dbReference type="PaxDb" id="83332-Rv3696c"/>
<dbReference type="DNASU" id="885280"/>
<dbReference type="GeneID" id="885280"/>
<dbReference type="KEGG" id="mtu:Rv3696c"/>
<dbReference type="KEGG" id="mtv:RVBD_3696c"/>
<dbReference type="PATRIC" id="fig|83332.111.peg.4110"/>
<dbReference type="TubercuList" id="Rv3696c"/>
<dbReference type="eggNOG" id="COG0554">
    <property type="taxonomic scope" value="Bacteria"/>
</dbReference>
<dbReference type="InParanoid" id="P9WPK1"/>
<dbReference type="OrthoDB" id="9805576at2"/>
<dbReference type="PhylomeDB" id="P9WPK1"/>
<dbReference type="BRENDA" id="2.7.1.30">
    <property type="organism ID" value="3445"/>
</dbReference>
<dbReference type="UniPathway" id="UPA00618">
    <property type="reaction ID" value="UER00672"/>
</dbReference>
<dbReference type="Proteomes" id="UP000001584">
    <property type="component" value="Chromosome"/>
</dbReference>
<dbReference type="GO" id="GO:0005829">
    <property type="term" value="C:cytosol"/>
    <property type="evidence" value="ECO:0000318"/>
    <property type="project" value="GO_Central"/>
</dbReference>
<dbReference type="GO" id="GO:0005524">
    <property type="term" value="F:ATP binding"/>
    <property type="evidence" value="ECO:0007669"/>
    <property type="project" value="UniProtKB-UniRule"/>
</dbReference>
<dbReference type="GO" id="GO:0004370">
    <property type="term" value="F:glycerol kinase activity"/>
    <property type="evidence" value="ECO:0000250"/>
    <property type="project" value="UniProtKB"/>
</dbReference>
<dbReference type="GO" id="GO:0019563">
    <property type="term" value="P:glycerol catabolic process"/>
    <property type="evidence" value="ECO:0000318"/>
    <property type="project" value="GO_Central"/>
</dbReference>
<dbReference type="GO" id="GO:0006071">
    <property type="term" value="P:glycerol metabolic process"/>
    <property type="evidence" value="ECO:0000250"/>
    <property type="project" value="UniProtKB"/>
</dbReference>
<dbReference type="GO" id="GO:0006072">
    <property type="term" value="P:glycerol-3-phosphate metabolic process"/>
    <property type="evidence" value="ECO:0007669"/>
    <property type="project" value="InterPro"/>
</dbReference>
<dbReference type="CDD" id="cd07769">
    <property type="entry name" value="ASKHA_NBD_FGGY_GK"/>
    <property type="match status" value="1"/>
</dbReference>
<dbReference type="FunFam" id="3.30.420.40:FF:000007">
    <property type="entry name" value="Glycerol kinase"/>
    <property type="match status" value="1"/>
</dbReference>
<dbReference type="FunFam" id="3.30.420.40:FF:000008">
    <property type="entry name" value="Glycerol kinase"/>
    <property type="match status" value="1"/>
</dbReference>
<dbReference type="Gene3D" id="3.30.420.40">
    <property type="match status" value="2"/>
</dbReference>
<dbReference type="HAMAP" id="MF_00186">
    <property type="entry name" value="Glycerol_kin"/>
    <property type="match status" value="1"/>
</dbReference>
<dbReference type="InterPro" id="IPR043129">
    <property type="entry name" value="ATPase_NBD"/>
</dbReference>
<dbReference type="InterPro" id="IPR000577">
    <property type="entry name" value="Carb_kinase_FGGY"/>
</dbReference>
<dbReference type="InterPro" id="IPR018483">
    <property type="entry name" value="Carb_kinase_FGGY_CS"/>
</dbReference>
<dbReference type="InterPro" id="IPR018485">
    <property type="entry name" value="FGGY_C"/>
</dbReference>
<dbReference type="InterPro" id="IPR018484">
    <property type="entry name" value="FGGY_N"/>
</dbReference>
<dbReference type="InterPro" id="IPR005999">
    <property type="entry name" value="Glycerol_kin"/>
</dbReference>
<dbReference type="NCBIfam" id="TIGR01311">
    <property type="entry name" value="glycerol_kin"/>
    <property type="match status" value="1"/>
</dbReference>
<dbReference type="NCBIfam" id="NF000756">
    <property type="entry name" value="PRK00047.1"/>
    <property type="match status" value="1"/>
</dbReference>
<dbReference type="PANTHER" id="PTHR10196:SF69">
    <property type="entry name" value="GLYCEROL KINASE"/>
    <property type="match status" value="1"/>
</dbReference>
<dbReference type="PANTHER" id="PTHR10196">
    <property type="entry name" value="SUGAR KINASE"/>
    <property type="match status" value="1"/>
</dbReference>
<dbReference type="Pfam" id="PF02782">
    <property type="entry name" value="FGGY_C"/>
    <property type="match status" value="1"/>
</dbReference>
<dbReference type="Pfam" id="PF00370">
    <property type="entry name" value="FGGY_N"/>
    <property type="match status" value="1"/>
</dbReference>
<dbReference type="PIRSF" id="PIRSF000538">
    <property type="entry name" value="GlpK"/>
    <property type="match status" value="1"/>
</dbReference>
<dbReference type="SUPFAM" id="SSF53067">
    <property type="entry name" value="Actin-like ATPase domain"/>
    <property type="match status" value="2"/>
</dbReference>
<dbReference type="PROSITE" id="PS00933">
    <property type="entry name" value="FGGY_KINASES_1"/>
    <property type="match status" value="1"/>
</dbReference>
<dbReference type="PROSITE" id="PS00445">
    <property type="entry name" value="FGGY_KINASES_2"/>
    <property type="match status" value="1"/>
</dbReference>
<proteinExistence type="evidence at protein level"/>
<organism>
    <name type="scientific">Mycobacterium tuberculosis (strain ATCC 25618 / H37Rv)</name>
    <dbReference type="NCBI Taxonomy" id="83332"/>
    <lineage>
        <taxon>Bacteria</taxon>
        <taxon>Bacillati</taxon>
        <taxon>Actinomycetota</taxon>
        <taxon>Actinomycetes</taxon>
        <taxon>Mycobacteriales</taxon>
        <taxon>Mycobacteriaceae</taxon>
        <taxon>Mycobacterium</taxon>
        <taxon>Mycobacterium tuberculosis complex</taxon>
    </lineage>
</organism>
<sequence length="517" mass="55860">MSDAILGEQLAESSDFIAAIDQGTTSTRCMIFDHHGAEVARHQLEHEQILPRAGWVEHNPVEIWERTASVLISVLNATNLSPKDIAALGITNQRETTLVWNRHTGRPYYNAIVWQDTRTDRIASALDRDGRGNLIRRKAGLPPATYFSGGKLQWILENVDGVRAAAENGDALFGTPDTWVLWNLTGGPRGGVHVTDVTNASRTMLMDLETLDWDDELLSLFSIPRAMLPEIASSAPSEPYGVTLATGPVGGEVPITGVLGDQHAAMVGQVCLAPGEAKNTYGTGNFLLLNTGETIVRSNNGLLTTVCYQFGNAKPVYALEGSIAVTGSAVQWLRDQLGIISGAAQSEALARQVPDNGGMYFVPAFSGLFAPYWRSDARGAIVGLSRFNTNAHLARATLEAICYQSRDVVDAMEADSGVRLQVLKVDGGITGNDLCMQIQADVLGVDVVRPVVAETTALGVAYAAGLAVGFWAAPSDLRANWREDKRWTPTWDDDERAAGYAGWRKAVQRTLDWVDVS</sequence>
<protein>
    <recommendedName>
        <fullName evidence="1">Glycerol kinase</fullName>
        <ecNumber evidence="1">2.7.1.30</ecNumber>
    </recommendedName>
    <alternativeName>
        <fullName evidence="1">ATP:glycerol 3-phosphotransferase</fullName>
    </alternativeName>
    <alternativeName>
        <fullName evidence="1">Glycerokinase</fullName>
        <shortName evidence="1">GK</shortName>
    </alternativeName>
</protein>
<gene>
    <name evidence="1" type="primary">glpK</name>
    <name type="ordered locus">Rv3696c</name>
    <name type="ORF">MTV025.044c</name>
</gene>
<evidence type="ECO:0000255" key="1">
    <source>
        <dbReference type="HAMAP-Rule" id="MF_00186"/>
    </source>
</evidence>
<comment type="function">
    <text evidence="1">Key enzyme in the regulation of glycerol uptake and metabolism. Catalyzes the phosphorylation of glycerol to yield sn-glycerol 3-phosphate.</text>
</comment>
<comment type="catalytic activity">
    <reaction evidence="1">
        <text>glycerol + ATP = sn-glycerol 3-phosphate + ADP + H(+)</text>
        <dbReference type="Rhea" id="RHEA:21644"/>
        <dbReference type="ChEBI" id="CHEBI:15378"/>
        <dbReference type="ChEBI" id="CHEBI:17754"/>
        <dbReference type="ChEBI" id="CHEBI:30616"/>
        <dbReference type="ChEBI" id="CHEBI:57597"/>
        <dbReference type="ChEBI" id="CHEBI:456216"/>
        <dbReference type="EC" id="2.7.1.30"/>
    </reaction>
</comment>
<comment type="activity regulation">
    <text evidence="1">Inhibited by fructose 1,6-bisphosphate (FBP).</text>
</comment>
<comment type="pathway">
    <text evidence="1">Polyol metabolism; glycerol degradation via glycerol kinase pathway; sn-glycerol 3-phosphate from glycerol: step 1/1.</text>
</comment>
<comment type="similarity">
    <text evidence="1">Belongs to the FGGY kinase family.</text>
</comment>
<name>GLPK_MYCTU</name>
<accession>P9WPK1</accession>
<accession>L0TGG8</accession>
<accession>O69664</accession>
<reference key="1">
    <citation type="journal article" date="1998" name="Nature">
        <title>Deciphering the biology of Mycobacterium tuberculosis from the complete genome sequence.</title>
        <authorList>
            <person name="Cole S.T."/>
            <person name="Brosch R."/>
            <person name="Parkhill J."/>
            <person name="Garnier T."/>
            <person name="Churcher C.M."/>
            <person name="Harris D.E."/>
            <person name="Gordon S.V."/>
            <person name="Eiglmeier K."/>
            <person name="Gas S."/>
            <person name="Barry C.E. III"/>
            <person name="Tekaia F."/>
            <person name="Badcock K."/>
            <person name="Basham D."/>
            <person name="Brown D."/>
            <person name="Chillingworth T."/>
            <person name="Connor R."/>
            <person name="Davies R.M."/>
            <person name="Devlin K."/>
            <person name="Feltwell T."/>
            <person name="Gentles S."/>
            <person name="Hamlin N."/>
            <person name="Holroyd S."/>
            <person name="Hornsby T."/>
            <person name="Jagels K."/>
            <person name="Krogh A."/>
            <person name="McLean J."/>
            <person name="Moule S."/>
            <person name="Murphy L.D."/>
            <person name="Oliver S."/>
            <person name="Osborne J."/>
            <person name="Quail M.A."/>
            <person name="Rajandream M.A."/>
            <person name="Rogers J."/>
            <person name="Rutter S."/>
            <person name="Seeger K."/>
            <person name="Skelton S."/>
            <person name="Squares S."/>
            <person name="Squares R."/>
            <person name="Sulston J.E."/>
            <person name="Taylor K."/>
            <person name="Whitehead S."/>
            <person name="Barrell B.G."/>
        </authorList>
    </citation>
    <scope>NUCLEOTIDE SEQUENCE [LARGE SCALE GENOMIC DNA]</scope>
    <source>
        <strain>ATCC 25618 / H37Rv</strain>
    </source>
</reference>
<reference key="2">
    <citation type="journal article" date="2011" name="Mol. Cell. Proteomics">
        <title>Proteogenomic analysis of Mycobacterium tuberculosis by high resolution mass spectrometry.</title>
        <authorList>
            <person name="Kelkar D.S."/>
            <person name="Kumar D."/>
            <person name="Kumar P."/>
            <person name="Balakrishnan L."/>
            <person name="Muthusamy B."/>
            <person name="Yadav A.K."/>
            <person name="Shrivastava P."/>
            <person name="Marimuthu A."/>
            <person name="Anand S."/>
            <person name="Sundaram H."/>
            <person name="Kingsbury R."/>
            <person name="Harsha H.C."/>
            <person name="Nair B."/>
            <person name="Prasad T.S."/>
            <person name="Chauhan D.S."/>
            <person name="Katoch K."/>
            <person name="Katoch V.M."/>
            <person name="Kumar P."/>
            <person name="Chaerkady R."/>
            <person name="Ramachandran S."/>
            <person name="Dash D."/>
            <person name="Pandey A."/>
        </authorList>
    </citation>
    <scope>IDENTIFICATION BY MASS SPECTROMETRY [LARGE SCALE ANALYSIS]</scope>
    <source>
        <strain>ATCC 25618 / H37Rv</strain>
    </source>
</reference>
<feature type="chain" id="PRO_0000059472" description="Glycerol kinase">
    <location>
        <begin position="1"/>
        <end position="517"/>
    </location>
</feature>
<feature type="binding site" evidence="1">
    <location>
        <position position="24"/>
    </location>
    <ligand>
        <name>ADP</name>
        <dbReference type="ChEBI" id="CHEBI:456216"/>
    </ligand>
</feature>
<feature type="binding site" evidence="1">
    <location>
        <position position="24"/>
    </location>
    <ligand>
        <name>ATP</name>
        <dbReference type="ChEBI" id="CHEBI:30616"/>
    </ligand>
</feature>
<feature type="binding site" evidence="1">
    <location>
        <position position="24"/>
    </location>
    <ligand>
        <name>sn-glycerol 3-phosphate</name>
        <dbReference type="ChEBI" id="CHEBI:57597"/>
    </ligand>
</feature>
<feature type="binding site" evidence="1">
    <location>
        <position position="25"/>
    </location>
    <ligand>
        <name>ATP</name>
        <dbReference type="ChEBI" id="CHEBI:30616"/>
    </ligand>
</feature>
<feature type="binding site" evidence="1">
    <location>
        <position position="26"/>
    </location>
    <ligand>
        <name>ATP</name>
        <dbReference type="ChEBI" id="CHEBI:30616"/>
    </ligand>
</feature>
<feature type="binding site" evidence="1">
    <location>
        <position position="28"/>
    </location>
    <ligand>
        <name>ADP</name>
        <dbReference type="ChEBI" id="CHEBI:456216"/>
    </ligand>
</feature>
<feature type="binding site" evidence="1">
    <location>
        <position position="94"/>
    </location>
    <ligand>
        <name>glycerol</name>
        <dbReference type="ChEBI" id="CHEBI:17754"/>
    </ligand>
</feature>
<feature type="binding site" evidence="1">
    <location>
        <position position="94"/>
    </location>
    <ligand>
        <name>sn-glycerol 3-phosphate</name>
        <dbReference type="ChEBI" id="CHEBI:57597"/>
    </ligand>
</feature>
<feature type="binding site" evidence="1">
    <location>
        <position position="95"/>
    </location>
    <ligand>
        <name>glycerol</name>
        <dbReference type="ChEBI" id="CHEBI:17754"/>
    </ligand>
</feature>
<feature type="binding site" evidence="1">
    <location>
        <position position="95"/>
    </location>
    <ligand>
        <name>sn-glycerol 3-phosphate</name>
        <dbReference type="ChEBI" id="CHEBI:57597"/>
    </ligand>
</feature>
<feature type="binding site" evidence="1">
    <location>
        <position position="146"/>
    </location>
    <ligand>
        <name>glycerol</name>
        <dbReference type="ChEBI" id="CHEBI:17754"/>
    </ligand>
</feature>
<feature type="binding site" evidence="1">
    <location>
        <position position="146"/>
    </location>
    <ligand>
        <name>sn-glycerol 3-phosphate</name>
        <dbReference type="ChEBI" id="CHEBI:57597"/>
    </ligand>
</feature>
<feature type="binding site" evidence="1">
    <location>
        <position position="261"/>
    </location>
    <ligand>
        <name>glycerol</name>
        <dbReference type="ChEBI" id="CHEBI:17754"/>
    </ligand>
</feature>
<feature type="binding site" evidence="1">
    <location>
        <position position="261"/>
    </location>
    <ligand>
        <name>sn-glycerol 3-phosphate</name>
        <dbReference type="ChEBI" id="CHEBI:57597"/>
    </ligand>
</feature>
<feature type="binding site" evidence="1">
    <location>
        <position position="262"/>
    </location>
    <ligand>
        <name>glycerol</name>
        <dbReference type="ChEBI" id="CHEBI:17754"/>
    </ligand>
</feature>
<feature type="binding site" evidence="1">
    <location>
        <position position="283"/>
    </location>
    <ligand>
        <name>ADP</name>
        <dbReference type="ChEBI" id="CHEBI:456216"/>
    </ligand>
</feature>
<feature type="binding site" evidence="1">
    <location>
        <position position="283"/>
    </location>
    <ligand>
        <name>ATP</name>
        <dbReference type="ChEBI" id="CHEBI:30616"/>
    </ligand>
</feature>
<feature type="binding site" evidence="1">
    <location>
        <position position="327"/>
    </location>
    <ligand>
        <name>ADP</name>
        <dbReference type="ChEBI" id="CHEBI:456216"/>
    </ligand>
</feature>
<feature type="binding site" evidence="1">
    <location>
        <position position="327"/>
    </location>
    <ligand>
        <name>ATP</name>
        <dbReference type="ChEBI" id="CHEBI:30616"/>
    </ligand>
</feature>
<feature type="binding site" evidence="1">
    <location>
        <position position="331"/>
    </location>
    <ligand>
        <name>ATP</name>
        <dbReference type="ChEBI" id="CHEBI:30616"/>
    </ligand>
</feature>
<feature type="binding site" evidence="1">
    <location>
        <position position="428"/>
    </location>
    <ligand>
        <name>ADP</name>
        <dbReference type="ChEBI" id="CHEBI:456216"/>
    </ligand>
</feature>
<feature type="binding site" evidence="1">
    <location>
        <position position="428"/>
    </location>
    <ligand>
        <name>ATP</name>
        <dbReference type="ChEBI" id="CHEBI:30616"/>
    </ligand>
</feature>
<feature type="binding site" evidence="1">
    <location>
        <position position="432"/>
    </location>
    <ligand>
        <name>ADP</name>
        <dbReference type="ChEBI" id="CHEBI:456216"/>
    </ligand>
</feature>
<keyword id="KW-0067">ATP-binding</keyword>
<keyword id="KW-0319">Glycerol metabolism</keyword>
<keyword id="KW-0418">Kinase</keyword>
<keyword id="KW-0547">Nucleotide-binding</keyword>
<keyword id="KW-1185">Reference proteome</keyword>
<keyword id="KW-0808">Transferase</keyword>